<accession>Q6KI41</accession>
<sequence>MSRVITDPIADMLVRIKNATARKHKNVLIPFSNKKSKILEIIKDQGYIFDFAIEGDSVKKNLNVTLKYKNNISVITGVKRISKPGLKVYSSVEDLPMVLNGYGIAIISTSKGVLTDKQARKENVGGEIVAYIW</sequence>
<proteinExistence type="inferred from homology"/>
<name>RS8_MYCM1</name>
<gene>
    <name evidence="1" type="primary">rpsH</name>
    <name type="ordered locus">MMOB2490</name>
</gene>
<evidence type="ECO:0000255" key="1">
    <source>
        <dbReference type="HAMAP-Rule" id="MF_01302"/>
    </source>
</evidence>
<evidence type="ECO:0000305" key="2"/>
<organism>
    <name type="scientific">Mycoplasma mobile (strain ATCC 43663 / 163K / NCTC 11711)</name>
    <name type="common">Mesomycoplasma mobile</name>
    <dbReference type="NCBI Taxonomy" id="267748"/>
    <lineage>
        <taxon>Bacteria</taxon>
        <taxon>Bacillati</taxon>
        <taxon>Mycoplasmatota</taxon>
        <taxon>Mycoplasmoidales</taxon>
        <taxon>Metamycoplasmataceae</taxon>
        <taxon>Mesomycoplasma</taxon>
    </lineage>
</organism>
<reference key="1">
    <citation type="journal article" date="2004" name="Genome Res.">
        <title>The complete genome and proteome of Mycoplasma mobile.</title>
        <authorList>
            <person name="Jaffe J.D."/>
            <person name="Stange-Thomann N."/>
            <person name="Smith C."/>
            <person name="DeCaprio D."/>
            <person name="Fisher S."/>
            <person name="Butler J."/>
            <person name="Calvo S."/>
            <person name="Elkins T."/>
            <person name="FitzGerald M.G."/>
            <person name="Hafez N."/>
            <person name="Kodira C.D."/>
            <person name="Major J."/>
            <person name="Wang S."/>
            <person name="Wilkinson J."/>
            <person name="Nicol R."/>
            <person name="Nusbaum C."/>
            <person name="Birren B."/>
            <person name="Berg H.C."/>
            <person name="Church G.M."/>
        </authorList>
    </citation>
    <scope>NUCLEOTIDE SEQUENCE [LARGE SCALE GENOMIC DNA]</scope>
    <source>
        <strain>ATCC 43663 / NCTC 11711 / 163 K</strain>
    </source>
</reference>
<feature type="chain" id="PRO_0000126442" description="Small ribosomal subunit protein uS8">
    <location>
        <begin position="1"/>
        <end position="133"/>
    </location>
</feature>
<protein>
    <recommendedName>
        <fullName evidence="1">Small ribosomal subunit protein uS8</fullName>
    </recommendedName>
    <alternativeName>
        <fullName evidence="2">30S ribosomal protein S8</fullName>
    </alternativeName>
</protein>
<dbReference type="EMBL" id="AE017308">
    <property type="protein sequence ID" value="AAT27735.1"/>
    <property type="molecule type" value="Genomic_DNA"/>
</dbReference>
<dbReference type="RefSeq" id="WP_011264769.1">
    <property type="nucleotide sequence ID" value="NC_006908.1"/>
</dbReference>
<dbReference type="SMR" id="Q6KI41"/>
<dbReference type="STRING" id="267748.MMOB2490"/>
<dbReference type="KEGG" id="mmo:MMOB2490"/>
<dbReference type="eggNOG" id="COG0096">
    <property type="taxonomic scope" value="Bacteria"/>
</dbReference>
<dbReference type="HOGENOM" id="CLU_098428_0_2_14"/>
<dbReference type="OrthoDB" id="9802617at2"/>
<dbReference type="Proteomes" id="UP000009072">
    <property type="component" value="Chromosome"/>
</dbReference>
<dbReference type="GO" id="GO:1990904">
    <property type="term" value="C:ribonucleoprotein complex"/>
    <property type="evidence" value="ECO:0007669"/>
    <property type="project" value="UniProtKB-KW"/>
</dbReference>
<dbReference type="GO" id="GO:0005840">
    <property type="term" value="C:ribosome"/>
    <property type="evidence" value="ECO:0007669"/>
    <property type="project" value="UniProtKB-KW"/>
</dbReference>
<dbReference type="GO" id="GO:0019843">
    <property type="term" value="F:rRNA binding"/>
    <property type="evidence" value="ECO:0007669"/>
    <property type="project" value="UniProtKB-UniRule"/>
</dbReference>
<dbReference type="GO" id="GO:0003735">
    <property type="term" value="F:structural constituent of ribosome"/>
    <property type="evidence" value="ECO:0007669"/>
    <property type="project" value="InterPro"/>
</dbReference>
<dbReference type="GO" id="GO:0006412">
    <property type="term" value="P:translation"/>
    <property type="evidence" value="ECO:0007669"/>
    <property type="project" value="UniProtKB-UniRule"/>
</dbReference>
<dbReference type="FunFam" id="3.30.1370.30:FF:000002">
    <property type="entry name" value="30S ribosomal protein S8"/>
    <property type="match status" value="1"/>
</dbReference>
<dbReference type="FunFam" id="3.30.1490.10:FF:000001">
    <property type="entry name" value="30S ribosomal protein S8"/>
    <property type="match status" value="1"/>
</dbReference>
<dbReference type="Gene3D" id="3.30.1370.30">
    <property type="match status" value="1"/>
</dbReference>
<dbReference type="Gene3D" id="3.30.1490.10">
    <property type="match status" value="1"/>
</dbReference>
<dbReference type="HAMAP" id="MF_01302_B">
    <property type="entry name" value="Ribosomal_uS8_B"/>
    <property type="match status" value="1"/>
</dbReference>
<dbReference type="InterPro" id="IPR000630">
    <property type="entry name" value="Ribosomal_uS8"/>
</dbReference>
<dbReference type="InterPro" id="IPR047863">
    <property type="entry name" value="Ribosomal_uS8_CS"/>
</dbReference>
<dbReference type="InterPro" id="IPR035987">
    <property type="entry name" value="Ribosomal_uS8_sf"/>
</dbReference>
<dbReference type="NCBIfam" id="NF001109">
    <property type="entry name" value="PRK00136.1"/>
    <property type="match status" value="1"/>
</dbReference>
<dbReference type="PANTHER" id="PTHR11758">
    <property type="entry name" value="40S RIBOSOMAL PROTEIN S15A"/>
    <property type="match status" value="1"/>
</dbReference>
<dbReference type="Pfam" id="PF00410">
    <property type="entry name" value="Ribosomal_S8"/>
    <property type="match status" value="1"/>
</dbReference>
<dbReference type="SUPFAM" id="SSF56047">
    <property type="entry name" value="Ribosomal protein S8"/>
    <property type="match status" value="1"/>
</dbReference>
<dbReference type="PROSITE" id="PS00053">
    <property type="entry name" value="RIBOSOMAL_S8"/>
    <property type="match status" value="1"/>
</dbReference>
<comment type="function">
    <text evidence="1">One of the primary rRNA binding proteins, it binds directly to 16S rRNA central domain where it helps coordinate assembly of the platform of the 30S subunit.</text>
</comment>
<comment type="subunit">
    <text evidence="1">Part of the 30S ribosomal subunit. Contacts proteins S5 and S12.</text>
</comment>
<comment type="similarity">
    <text evidence="1">Belongs to the universal ribosomal protein uS8 family.</text>
</comment>
<keyword id="KW-1185">Reference proteome</keyword>
<keyword id="KW-0687">Ribonucleoprotein</keyword>
<keyword id="KW-0689">Ribosomal protein</keyword>
<keyword id="KW-0694">RNA-binding</keyword>
<keyword id="KW-0699">rRNA-binding</keyword>